<feature type="chain" id="PRO_0000255766" description="Bifunctional protein HldE">
    <location>
        <begin position="1"/>
        <end position="488"/>
    </location>
</feature>
<feature type="region of interest" description="Ribokinase">
    <location>
        <begin position="1"/>
        <end position="332"/>
    </location>
</feature>
<feature type="region of interest" description="Cytidylyltransferase">
    <location>
        <begin position="359"/>
        <end position="488"/>
    </location>
</feature>
<feature type="active site" evidence="1">
    <location>
        <position position="277"/>
    </location>
</feature>
<feature type="binding site" evidence="1">
    <location>
        <begin position="208"/>
        <end position="211"/>
    </location>
    <ligand>
        <name>ATP</name>
        <dbReference type="ChEBI" id="CHEBI:30616"/>
    </ligand>
</feature>
<reference key="1">
    <citation type="submission" date="2006-03" db="EMBL/GenBank/DDBJ databases">
        <title>Complete sequence of Methylobacillus flagellatus KT.</title>
        <authorList>
            <consortium name="US DOE Joint Genome Institute"/>
            <person name="Copeland A."/>
            <person name="Lucas S."/>
            <person name="Lapidus A."/>
            <person name="Barry K."/>
            <person name="Detter J.C."/>
            <person name="Glavina del Rio T."/>
            <person name="Hammon N."/>
            <person name="Israni S."/>
            <person name="Dalin E."/>
            <person name="Tice H."/>
            <person name="Pitluck S."/>
            <person name="Brettin T."/>
            <person name="Bruce D."/>
            <person name="Han C."/>
            <person name="Tapia R."/>
            <person name="Saunders E."/>
            <person name="Gilna P."/>
            <person name="Schmutz J."/>
            <person name="Larimer F."/>
            <person name="Land M."/>
            <person name="Kyrpides N."/>
            <person name="Anderson I."/>
            <person name="Richardson P."/>
        </authorList>
    </citation>
    <scope>NUCLEOTIDE SEQUENCE [LARGE SCALE GENOMIC DNA]</scope>
    <source>
        <strain>ATCC 51484 / DSM 6875 / VKM B-1610 / KT</strain>
    </source>
</reference>
<accession>Q1H3A0</accession>
<gene>
    <name evidence="1" type="primary">hldE</name>
    <name type="ordered locus">Mfla_0769</name>
</gene>
<dbReference type="EC" id="2.7.1.167" evidence="1"/>
<dbReference type="EC" id="2.7.7.70" evidence="1"/>
<dbReference type="EMBL" id="CP000284">
    <property type="protein sequence ID" value="ABE49037.1"/>
    <property type="molecule type" value="Genomic_DNA"/>
</dbReference>
<dbReference type="RefSeq" id="WP_011479134.1">
    <property type="nucleotide sequence ID" value="NC_007947.1"/>
</dbReference>
<dbReference type="SMR" id="Q1H3A0"/>
<dbReference type="STRING" id="265072.Mfla_0769"/>
<dbReference type="KEGG" id="mfa:Mfla_0769"/>
<dbReference type="eggNOG" id="COG0615">
    <property type="taxonomic scope" value="Bacteria"/>
</dbReference>
<dbReference type="eggNOG" id="COG2870">
    <property type="taxonomic scope" value="Bacteria"/>
</dbReference>
<dbReference type="HOGENOM" id="CLU_021150_2_1_4"/>
<dbReference type="OrthoDB" id="9802794at2"/>
<dbReference type="UniPathway" id="UPA00356">
    <property type="reaction ID" value="UER00437"/>
</dbReference>
<dbReference type="UniPathway" id="UPA00356">
    <property type="reaction ID" value="UER00439"/>
</dbReference>
<dbReference type="Proteomes" id="UP000002440">
    <property type="component" value="Chromosome"/>
</dbReference>
<dbReference type="GO" id="GO:0005829">
    <property type="term" value="C:cytosol"/>
    <property type="evidence" value="ECO:0007669"/>
    <property type="project" value="TreeGrafter"/>
</dbReference>
<dbReference type="GO" id="GO:0005524">
    <property type="term" value="F:ATP binding"/>
    <property type="evidence" value="ECO:0007669"/>
    <property type="project" value="UniProtKB-UniRule"/>
</dbReference>
<dbReference type="GO" id="GO:0033785">
    <property type="term" value="F:heptose 7-phosphate kinase activity"/>
    <property type="evidence" value="ECO:0007669"/>
    <property type="project" value="UniProtKB-UniRule"/>
</dbReference>
<dbReference type="GO" id="GO:0033786">
    <property type="term" value="F:heptose-1-phosphate adenylyltransferase activity"/>
    <property type="evidence" value="ECO:0007669"/>
    <property type="project" value="UniProtKB-UniRule"/>
</dbReference>
<dbReference type="GO" id="GO:0016773">
    <property type="term" value="F:phosphotransferase activity, alcohol group as acceptor"/>
    <property type="evidence" value="ECO:0007669"/>
    <property type="project" value="InterPro"/>
</dbReference>
<dbReference type="GO" id="GO:0097171">
    <property type="term" value="P:ADP-L-glycero-beta-D-manno-heptose biosynthetic process"/>
    <property type="evidence" value="ECO:0007669"/>
    <property type="project" value="UniProtKB-UniPathway"/>
</dbReference>
<dbReference type="CDD" id="cd01172">
    <property type="entry name" value="RfaE_like"/>
    <property type="match status" value="1"/>
</dbReference>
<dbReference type="FunFam" id="3.40.1190.20:FF:000002">
    <property type="entry name" value="Bifunctional protein HldE"/>
    <property type="match status" value="1"/>
</dbReference>
<dbReference type="Gene3D" id="3.40.1190.20">
    <property type="match status" value="1"/>
</dbReference>
<dbReference type="Gene3D" id="3.40.50.620">
    <property type="entry name" value="HUPs"/>
    <property type="match status" value="1"/>
</dbReference>
<dbReference type="HAMAP" id="MF_01603">
    <property type="entry name" value="HldE"/>
    <property type="match status" value="1"/>
</dbReference>
<dbReference type="InterPro" id="IPR023030">
    <property type="entry name" value="Bifunc_HldE"/>
</dbReference>
<dbReference type="InterPro" id="IPR004821">
    <property type="entry name" value="Cyt_trans-like"/>
</dbReference>
<dbReference type="InterPro" id="IPR011611">
    <property type="entry name" value="PfkB_dom"/>
</dbReference>
<dbReference type="InterPro" id="IPR011913">
    <property type="entry name" value="RfaE_dom_I"/>
</dbReference>
<dbReference type="InterPro" id="IPR011914">
    <property type="entry name" value="RfaE_dom_II"/>
</dbReference>
<dbReference type="InterPro" id="IPR029056">
    <property type="entry name" value="Ribokinase-like"/>
</dbReference>
<dbReference type="InterPro" id="IPR014729">
    <property type="entry name" value="Rossmann-like_a/b/a_fold"/>
</dbReference>
<dbReference type="NCBIfam" id="TIGR00125">
    <property type="entry name" value="cyt_tran_rel"/>
    <property type="match status" value="1"/>
</dbReference>
<dbReference type="NCBIfam" id="NF008454">
    <property type="entry name" value="PRK11316.1"/>
    <property type="match status" value="1"/>
</dbReference>
<dbReference type="NCBIfam" id="TIGR02198">
    <property type="entry name" value="rfaE_dom_I"/>
    <property type="match status" value="1"/>
</dbReference>
<dbReference type="NCBIfam" id="TIGR02199">
    <property type="entry name" value="rfaE_dom_II"/>
    <property type="match status" value="1"/>
</dbReference>
<dbReference type="PANTHER" id="PTHR46969">
    <property type="entry name" value="BIFUNCTIONAL PROTEIN HLDE"/>
    <property type="match status" value="1"/>
</dbReference>
<dbReference type="PANTHER" id="PTHR46969:SF1">
    <property type="entry name" value="BIFUNCTIONAL PROTEIN HLDE"/>
    <property type="match status" value="1"/>
</dbReference>
<dbReference type="Pfam" id="PF01467">
    <property type="entry name" value="CTP_transf_like"/>
    <property type="match status" value="1"/>
</dbReference>
<dbReference type="Pfam" id="PF00294">
    <property type="entry name" value="PfkB"/>
    <property type="match status" value="1"/>
</dbReference>
<dbReference type="SUPFAM" id="SSF52374">
    <property type="entry name" value="Nucleotidylyl transferase"/>
    <property type="match status" value="1"/>
</dbReference>
<dbReference type="SUPFAM" id="SSF53613">
    <property type="entry name" value="Ribokinase-like"/>
    <property type="match status" value="1"/>
</dbReference>
<keyword id="KW-0067">ATP-binding</keyword>
<keyword id="KW-0119">Carbohydrate metabolism</keyword>
<keyword id="KW-0418">Kinase</keyword>
<keyword id="KW-0511">Multifunctional enzyme</keyword>
<keyword id="KW-0547">Nucleotide-binding</keyword>
<keyword id="KW-0548">Nucleotidyltransferase</keyword>
<keyword id="KW-1185">Reference proteome</keyword>
<keyword id="KW-0808">Transferase</keyword>
<name>HLDE_METFK</name>
<proteinExistence type="inferred from homology"/>
<comment type="function">
    <text evidence="1">Catalyzes the phosphorylation of D-glycero-D-manno-heptose 7-phosphate at the C-1 position to selectively form D-glycero-beta-D-manno-heptose-1,7-bisphosphate.</text>
</comment>
<comment type="function">
    <text evidence="1">Catalyzes the ADP transfer from ATP to D-glycero-beta-D-manno-heptose 1-phosphate, yielding ADP-D-glycero-beta-D-manno-heptose.</text>
</comment>
<comment type="catalytic activity">
    <reaction evidence="1">
        <text>D-glycero-beta-D-manno-heptose 7-phosphate + ATP = D-glycero-beta-D-manno-heptose 1,7-bisphosphate + ADP + H(+)</text>
        <dbReference type="Rhea" id="RHEA:27473"/>
        <dbReference type="ChEBI" id="CHEBI:15378"/>
        <dbReference type="ChEBI" id="CHEBI:30616"/>
        <dbReference type="ChEBI" id="CHEBI:60204"/>
        <dbReference type="ChEBI" id="CHEBI:60208"/>
        <dbReference type="ChEBI" id="CHEBI:456216"/>
        <dbReference type="EC" id="2.7.1.167"/>
    </reaction>
</comment>
<comment type="catalytic activity">
    <reaction evidence="1">
        <text>D-glycero-beta-D-manno-heptose 1-phosphate + ATP + H(+) = ADP-D-glycero-beta-D-manno-heptose + diphosphate</text>
        <dbReference type="Rhea" id="RHEA:27465"/>
        <dbReference type="ChEBI" id="CHEBI:15378"/>
        <dbReference type="ChEBI" id="CHEBI:30616"/>
        <dbReference type="ChEBI" id="CHEBI:33019"/>
        <dbReference type="ChEBI" id="CHEBI:59967"/>
        <dbReference type="ChEBI" id="CHEBI:61593"/>
        <dbReference type="EC" id="2.7.7.70"/>
    </reaction>
</comment>
<comment type="pathway">
    <text evidence="1">Nucleotide-sugar biosynthesis; ADP-L-glycero-beta-D-manno-heptose biosynthesis; ADP-L-glycero-beta-D-manno-heptose from D-glycero-beta-D-manno-heptose 7-phosphate: step 1/4.</text>
</comment>
<comment type="pathway">
    <text evidence="1">Nucleotide-sugar biosynthesis; ADP-L-glycero-beta-D-manno-heptose biosynthesis; ADP-L-glycero-beta-D-manno-heptose from D-glycero-beta-D-manno-heptose 7-phosphate: step 3/4.</text>
</comment>
<comment type="subunit">
    <text evidence="1">Homodimer.</text>
</comment>
<comment type="similarity">
    <text evidence="1">In the N-terminal section; belongs to the carbohydrate kinase PfkB family.</text>
</comment>
<comment type="similarity">
    <text evidence="1">In the C-terminal section; belongs to the cytidylyltransferase family.</text>
</comment>
<organism>
    <name type="scientific">Methylobacillus flagellatus (strain ATCC 51484 / DSM 6875 / VKM B-1610 / KT)</name>
    <dbReference type="NCBI Taxonomy" id="265072"/>
    <lineage>
        <taxon>Bacteria</taxon>
        <taxon>Pseudomonadati</taxon>
        <taxon>Pseudomonadota</taxon>
        <taxon>Betaproteobacteria</taxon>
        <taxon>Nitrosomonadales</taxon>
        <taxon>Methylophilaceae</taxon>
        <taxon>Methylobacillus</taxon>
    </lineage>
</organism>
<protein>
    <recommendedName>
        <fullName evidence="1">Bifunctional protein HldE</fullName>
    </recommendedName>
    <domain>
        <recommendedName>
            <fullName evidence="1">D-beta-D-heptose 7-phosphate kinase</fullName>
            <ecNumber evidence="1">2.7.1.167</ecNumber>
        </recommendedName>
        <alternativeName>
            <fullName evidence="1">D-beta-D-heptose 7-phosphotransferase</fullName>
        </alternativeName>
        <alternativeName>
            <fullName evidence="1">D-glycero-beta-D-manno-heptose-7-phosphate kinase</fullName>
        </alternativeName>
    </domain>
    <domain>
        <recommendedName>
            <fullName evidence="1">D-beta-D-heptose 1-phosphate adenylyltransferase</fullName>
            <ecNumber evidence="1">2.7.7.70</ecNumber>
        </recommendedName>
        <alternativeName>
            <fullName evidence="1">D-glycero-beta-D-manno-heptose 1-phosphate adenylyltransferase</fullName>
        </alternativeName>
    </domain>
</protein>
<evidence type="ECO:0000255" key="1">
    <source>
        <dbReference type="HAMAP-Rule" id="MF_01603"/>
    </source>
</evidence>
<sequence length="488" mass="51948">MRESFLDTIQHHFGHDPVWILVVGDLMLDRYLFGDVQRISPEAPVPVVLLKSQDERAGGAANVAANLAGLGIKTRIAGVIGQDAEAETLLGLMHDIGADTQHIHCSACRPTITKTRILGGHQQMMRLDQEDAAALSAEEQLALQTAIAAALTDRPAAIILSDYAKGVLSETLCQSIIAQATASGIPVLVDPKGRDYSKYHGATGLTPNKRETAEACHVAPHDDQALLAAAEQLRHTLKLDFLAVTRGEEGITVLDRQGSAHLAATARQVYDVSGAGDTVIATLTAGLAHGLPLHDAIELANIAAGIVVGKVGTVPINKAELEQELQSQQSAAQADKVCNLDSLLARVQNWRHQGERIVFTNGCFDLLHAGHVTYLEAARNTGDRLVLGLNTDRSVSALKGPSRPVIHEQDRARVLAALESVDAVILFDEDTPIDLINAIRPDVIAKGSDYTEDQVVGGAEVKSWGGKVALIDVVPGRSTSNIIRKLAS</sequence>